<gene>
    <name type="primary">ybdK</name>
    <name type="ordered locus">UTI89_C0581</name>
</gene>
<evidence type="ECO:0000255" key="1">
    <source>
        <dbReference type="HAMAP-Rule" id="MF_01609"/>
    </source>
</evidence>
<accession>Q1REY3</accession>
<comment type="function">
    <text evidence="1">ATP-dependent carboxylate-amine ligase which exhibits weak glutamate--cysteine ligase activity.</text>
</comment>
<comment type="catalytic activity">
    <reaction evidence="1">
        <text>L-cysteine + L-glutamate + ATP = gamma-L-glutamyl-L-cysteine + ADP + phosphate + H(+)</text>
        <dbReference type="Rhea" id="RHEA:13285"/>
        <dbReference type="ChEBI" id="CHEBI:15378"/>
        <dbReference type="ChEBI" id="CHEBI:29985"/>
        <dbReference type="ChEBI" id="CHEBI:30616"/>
        <dbReference type="ChEBI" id="CHEBI:35235"/>
        <dbReference type="ChEBI" id="CHEBI:43474"/>
        <dbReference type="ChEBI" id="CHEBI:58173"/>
        <dbReference type="ChEBI" id="CHEBI:456216"/>
        <dbReference type="EC" id="6.3.2.2"/>
    </reaction>
</comment>
<comment type="subunit">
    <text evidence="1">Homodimer.</text>
</comment>
<comment type="similarity">
    <text evidence="1">Belongs to the glutamate--cysteine ligase type 2 family. YbdK subfamily.</text>
</comment>
<dbReference type="EC" id="6.3.2.2" evidence="1"/>
<dbReference type="EMBL" id="CP000243">
    <property type="protein sequence ID" value="ABE06081.1"/>
    <property type="molecule type" value="Genomic_DNA"/>
</dbReference>
<dbReference type="RefSeq" id="WP_001130659.1">
    <property type="nucleotide sequence ID" value="NZ_CP064825.1"/>
</dbReference>
<dbReference type="SMR" id="Q1REY3"/>
<dbReference type="KEGG" id="eci:UTI89_C0581"/>
<dbReference type="HOGENOM" id="CLU_044848_1_1_6"/>
<dbReference type="Proteomes" id="UP000001952">
    <property type="component" value="Chromosome"/>
</dbReference>
<dbReference type="GO" id="GO:0005524">
    <property type="term" value="F:ATP binding"/>
    <property type="evidence" value="ECO:0007669"/>
    <property type="project" value="UniProtKB-KW"/>
</dbReference>
<dbReference type="GO" id="GO:0004357">
    <property type="term" value="F:glutamate-cysteine ligase activity"/>
    <property type="evidence" value="ECO:0007669"/>
    <property type="project" value="UniProtKB-EC"/>
</dbReference>
<dbReference type="GO" id="GO:0042398">
    <property type="term" value="P:modified amino acid biosynthetic process"/>
    <property type="evidence" value="ECO:0007669"/>
    <property type="project" value="InterPro"/>
</dbReference>
<dbReference type="FunFam" id="3.30.590.20:FF:000002">
    <property type="entry name" value="Putative glutamate--cysteine ligase 2"/>
    <property type="match status" value="1"/>
</dbReference>
<dbReference type="Gene3D" id="3.30.590.20">
    <property type="match status" value="1"/>
</dbReference>
<dbReference type="HAMAP" id="MF_01609">
    <property type="entry name" value="Glu_cys_ligase_2"/>
    <property type="match status" value="1"/>
</dbReference>
<dbReference type="InterPro" id="IPR050141">
    <property type="entry name" value="GCL_type2/YbdK_subfam"/>
</dbReference>
<dbReference type="InterPro" id="IPR006336">
    <property type="entry name" value="GCS2"/>
</dbReference>
<dbReference type="InterPro" id="IPR014746">
    <property type="entry name" value="Gln_synth/guanido_kin_cat_dom"/>
</dbReference>
<dbReference type="InterPro" id="IPR011793">
    <property type="entry name" value="YbdK"/>
</dbReference>
<dbReference type="NCBIfam" id="TIGR02050">
    <property type="entry name" value="gshA_cyan_rel"/>
    <property type="match status" value="1"/>
</dbReference>
<dbReference type="NCBIfam" id="NF010040">
    <property type="entry name" value="PRK13516.1"/>
    <property type="match status" value="1"/>
</dbReference>
<dbReference type="PANTHER" id="PTHR36510">
    <property type="entry name" value="GLUTAMATE--CYSTEINE LIGASE 2-RELATED"/>
    <property type="match status" value="1"/>
</dbReference>
<dbReference type="PANTHER" id="PTHR36510:SF1">
    <property type="entry name" value="GLUTAMATE--CYSTEINE LIGASE 2-RELATED"/>
    <property type="match status" value="1"/>
</dbReference>
<dbReference type="Pfam" id="PF04107">
    <property type="entry name" value="GCS2"/>
    <property type="match status" value="1"/>
</dbReference>
<dbReference type="SUPFAM" id="SSF55931">
    <property type="entry name" value="Glutamine synthetase/guanido kinase"/>
    <property type="match status" value="1"/>
</dbReference>
<keyword id="KW-0067">ATP-binding</keyword>
<keyword id="KW-0436">Ligase</keyword>
<keyword id="KW-0547">Nucleotide-binding</keyword>
<reference key="1">
    <citation type="journal article" date="2006" name="Proc. Natl. Acad. Sci. U.S.A.">
        <title>Identification of genes subject to positive selection in uropathogenic strains of Escherichia coli: a comparative genomics approach.</title>
        <authorList>
            <person name="Chen S.L."/>
            <person name="Hung C.-S."/>
            <person name="Xu J."/>
            <person name="Reigstad C.S."/>
            <person name="Magrini V."/>
            <person name="Sabo A."/>
            <person name="Blasiar D."/>
            <person name="Bieri T."/>
            <person name="Meyer R.R."/>
            <person name="Ozersky P."/>
            <person name="Armstrong J.R."/>
            <person name="Fulton R.S."/>
            <person name="Latreille J.P."/>
            <person name="Spieth J."/>
            <person name="Hooton T.M."/>
            <person name="Mardis E.R."/>
            <person name="Hultgren S.J."/>
            <person name="Gordon J.I."/>
        </authorList>
    </citation>
    <scope>NUCLEOTIDE SEQUENCE [LARGE SCALE GENOMIC DNA]</scope>
    <source>
        <strain>UTI89 / UPEC</strain>
    </source>
</reference>
<organism>
    <name type="scientific">Escherichia coli (strain UTI89 / UPEC)</name>
    <dbReference type="NCBI Taxonomy" id="364106"/>
    <lineage>
        <taxon>Bacteria</taxon>
        <taxon>Pseudomonadati</taxon>
        <taxon>Pseudomonadota</taxon>
        <taxon>Gammaproteobacteria</taxon>
        <taxon>Enterobacterales</taxon>
        <taxon>Enterobacteriaceae</taxon>
        <taxon>Escherichia</taxon>
    </lineage>
</organism>
<feature type="chain" id="PRO_0000255800" description="Putative glutamate--cysteine ligase 2">
    <location>
        <begin position="1"/>
        <end position="372"/>
    </location>
</feature>
<proteinExistence type="inferred from homology"/>
<protein>
    <recommendedName>
        <fullName evidence="1">Putative glutamate--cysteine ligase 2</fullName>
        <ecNumber evidence="1">6.3.2.2</ecNumber>
    </recommendedName>
    <alternativeName>
        <fullName evidence="1">Gamma-glutamylcysteine synthetase 2</fullName>
        <shortName evidence="1">GCS 2</shortName>
        <shortName evidence="1">Gamma-GCS 2</shortName>
    </alternativeName>
</protein>
<name>GCS2_ECOUT</name>
<sequence>MPLPDFHVSEPFTLGIELEMQVVNPPGYDLSQDSSMLIDAVKNQITAGEVKHDITESMLELATDVCRDINQAAGQFSAMQKVVLQAAADHHLEICGGGTHPFQKWQRQEVCDNERYQRTLENFGYLIQQATVFGQHVHVGCASGDDAIYLLHGLSRFVPHFIALSAASPYMQGTDTRFASSRPNIFSAFPDNGPMPWVSNWQQFEALFRCLSYTTMIDSIKDLHWDIRPSPHFGTVEVRVMDTPLTLSHAVNMAGLIQATAHWLLTERPFKHQEKDYLLYKFNRFQACRYGLEGVITDPHTGDRRSLTEATLRLLEKIAPSAHKIGASSAIEALHRQVVSGLNEAQLMRDFVADGGSLIGLVKKHCEIWAGE</sequence>